<proteinExistence type="inferred from homology"/>
<comment type="function">
    <text evidence="1">Required for the chromophorylation of the CpcA gene product.</text>
</comment>
<comment type="subunit">
    <text evidence="1">CpcE and CpcF associate to form a lyase.</text>
</comment>
<comment type="similarity">
    <text evidence="2">Belongs to the CpcE/RpcE/PecE family.</text>
</comment>
<evidence type="ECO:0000250" key="1"/>
<evidence type="ECO:0000305" key="2"/>
<keyword id="KW-0042">Antenna complex</keyword>
<keyword id="KW-0456">Lyase</keyword>
<keyword id="KW-0605">Phycobilisome</keyword>
<feature type="chain" id="PRO_0000199277" description="Phycocyanobilin lyase subunit beta">
    <location>
        <begin position="1" status="less than"/>
        <end position="107"/>
    </location>
</feature>
<feature type="non-terminal residue">
    <location>
        <position position="1"/>
    </location>
</feature>
<gene>
    <name type="primary">cpcF</name>
</gene>
<sequence>LQFCKLDPPQRQTAQTKALETLLLVSQDPNWLIRYAAVVGLEALAKIPQLQQPIQTRFAQILATDTEQAICSSRATGSKTRNRRQTTNRKLKPAFVLLLILFVPLSR</sequence>
<name>CPCF_MASLA</name>
<protein>
    <recommendedName>
        <fullName>Phycocyanobilin lyase subunit beta</fullName>
        <ecNumber>4.-.-.-</ecNumber>
    </recommendedName>
    <alternativeName>
        <fullName>Phycocyanin operon protein CpcF</fullName>
    </alternativeName>
</protein>
<organism>
    <name type="scientific">Mastigocladus laminosus</name>
    <name type="common">Fischerella sp.</name>
    <dbReference type="NCBI Taxonomy" id="83541"/>
    <lineage>
        <taxon>Bacteria</taxon>
        <taxon>Bacillati</taxon>
        <taxon>Cyanobacteriota</taxon>
        <taxon>Cyanophyceae</taxon>
        <taxon>Nostocales</taxon>
        <taxon>Hapalosiphonaceae</taxon>
        <taxon>Mastigocladus</taxon>
    </lineage>
</organism>
<dbReference type="EC" id="4.-.-.-"/>
<dbReference type="EMBL" id="X59763">
    <property type="protein sequence ID" value="CAA42432.1"/>
    <property type="molecule type" value="Genomic_DNA"/>
</dbReference>
<dbReference type="SMR" id="P29734"/>
<dbReference type="GO" id="GO:0030089">
    <property type="term" value="C:phycobilisome"/>
    <property type="evidence" value="ECO:0007669"/>
    <property type="project" value="UniProtKB-KW"/>
</dbReference>
<dbReference type="GO" id="GO:0016829">
    <property type="term" value="F:lyase activity"/>
    <property type="evidence" value="ECO:0007669"/>
    <property type="project" value="UniProtKB-KW"/>
</dbReference>
<accession>P29734</accession>
<reference key="1">
    <citation type="journal article" date="1992" name="Eur. J. Biochem.">
        <title>Structure of the genes encoding the rod-core linker polypeptides of Mastigocladus laminosus phycobilisomes and functional aspects of the phycobiliprotein/linker-polypeptide interactions.</title>
        <authorList>
            <person name="Glauser M."/>
            <person name="Stirewalt V.L."/>
            <person name="Bryant D.A."/>
            <person name="Sidler W."/>
            <person name="Zuber H."/>
        </authorList>
    </citation>
    <scope>NUCLEOTIDE SEQUENCE [GENOMIC DNA]</scope>
    <source>
        <strain>PCC 7603</strain>
    </source>
</reference>